<name>MRGB8_MOUSE</name>
<sequence>MDSSFPDWNIEFREQNESYFMESSSCDMSLAMSLLSIIIAIIGLTGNVIVLQLLGFHMHRNAFSVYIFNLSGANFLFLCTHIVFSLENLIRQFHYIDIHMALFSVNVTILAYLAGVSMITAISVEYWLSVLWPTWYHAQRPKHTSTVICTLLWVFSLLLTLWNWIICKVLDYIYNWDMCWKLALIIVVWLLVLFVVLSRSNQALLFRVFCGSQQTPVTRLLVTIMLTALVVLICGFGIGICFFYWKKEENSIMPCGYFYETILLLSGVNSCANPIICLFVGSIKHCQFQCGTLRLILQRAIQESPEEEDEEVEEVVEQEGGEEDEESTTL</sequence>
<protein>
    <recommendedName>
        <fullName>Mas-related G-protein coupled receptor member B8</fullName>
    </recommendedName>
</protein>
<organism>
    <name type="scientific">Mus musculus</name>
    <name type="common">Mouse</name>
    <dbReference type="NCBI Taxonomy" id="10090"/>
    <lineage>
        <taxon>Eukaryota</taxon>
        <taxon>Metazoa</taxon>
        <taxon>Chordata</taxon>
        <taxon>Craniata</taxon>
        <taxon>Vertebrata</taxon>
        <taxon>Euteleostomi</taxon>
        <taxon>Mammalia</taxon>
        <taxon>Eutheria</taxon>
        <taxon>Euarchontoglires</taxon>
        <taxon>Glires</taxon>
        <taxon>Rodentia</taxon>
        <taxon>Myomorpha</taxon>
        <taxon>Muroidea</taxon>
        <taxon>Muridae</taxon>
        <taxon>Murinae</taxon>
        <taxon>Mus</taxon>
        <taxon>Mus</taxon>
    </lineage>
</organism>
<proteinExistence type="evidence at transcript level"/>
<dbReference type="EMBL" id="AY266419">
    <property type="protein sequence ID" value="AAP20071.1"/>
    <property type="molecule type" value="Genomic_DNA"/>
</dbReference>
<dbReference type="EMBL" id="BC138164">
    <property type="protein sequence ID" value="AAI38165.1"/>
    <property type="molecule type" value="mRNA"/>
</dbReference>
<dbReference type="EMBL" id="BC138165">
    <property type="protein sequence ID" value="AAI38166.1"/>
    <property type="molecule type" value="mRNA"/>
</dbReference>
<dbReference type="CCDS" id="CCDS21302.1"/>
<dbReference type="RefSeq" id="NP_997422.1">
    <property type="nucleotide sequence ID" value="NM_207539.2"/>
</dbReference>
<dbReference type="SMR" id="Q7TN51"/>
<dbReference type="STRING" id="10090.ENSMUSP00000052230"/>
<dbReference type="GlyCosmos" id="Q7TN51">
    <property type="glycosylation" value="1 site, No reported glycans"/>
</dbReference>
<dbReference type="GlyGen" id="Q7TN51">
    <property type="glycosylation" value="1 site"/>
</dbReference>
<dbReference type="iPTMnet" id="Q7TN51"/>
<dbReference type="PhosphoSitePlus" id="Q7TN51"/>
<dbReference type="PaxDb" id="10090-ENSMUSP00000052230"/>
<dbReference type="DNASU" id="404240"/>
<dbReference type="Ensembl" id="ENSMUST00000056676.5">
    <property type="protein sequence ID" value="ENSMUSP00000052230.5"/>
    <property type="gene ID" value="ENSMUSG00000050870.5"/>
</dbReference>
<dbReference type="GeneID" id="404240"/>
<dbReference type="KEGG" id="mmu:404240"/>
<dbReference type="UCSC" id="uc009hao.2">
    <property type="organism name" value="mouse"/>
</dbReference>
<dbReference type="AGR" id="MGI:3033134"/>
<dbReference type="CTD" id="404240"/>
<dbReference type="MGI" id="MGI:3033134">
    <property type="gene designation" value="Mrgprb8"/>
</dbReference>
<dbReference type="VEuPathDB" id="HostDB:ENSMUSG00000050870"/>
<dbReference type="eggNOG" id="ENOG502RTWA">
    <property type="taxonomic scope" value="Eukaryota"/>
</dbReference>
<dbReference type="GeneTree" id="ENSGT01030000234639"/>
<dbReference type="HOGENOM" id="CLU_009579_4_1_1"/>
<dbReference type="InParanoid" id="Q7TN51"/>
<dbReference type="OMA" id="FMESSSC"/>
<dbReference type="OrthoDB" id="9631784at2759"/>
<dbReference type="PhylomeDB" id="Q7TN51"/>
<dbReference type="TreeFam" id="TF336336"/>
<dbReference type="BioGRID-ORCS" id="404240">
    <property type="hits" value="2 hits in 77 CRISPR screens"/>
</dbReference>
<dbReference type="PRO" id="PR:Q7TN51"/>
<dbReference type="Proteomes" id="UP000000589">
    <property type="component" value="Chromosome 7"/>
</dbReference>
<dbReference type="RNAct" id="Q7TN51">
    <property type="molecule type" value="protein"/>
</dbReference>
<dbReference type="Bgee" id="ENSMUSG00000050870">
    <property type="expression patterns" value="Expressed in testis and 1 other cell type or tissue"/>
</dbReference>
<dbReference type="GO" id="GO:0016020">
    <property type="term" value="C:membrane"/>
    <property type="evidence" value="ECO:0007669"/>
    <property type="project" value="UniProtKB-SubCell"/>
</dbReference>
<dbReference type="GO" id="GO:0004930">
    <property type="term" value="F:G protein-coupled receptor activity"/>
    <property type="evidence" value="ECO:0007669"/>
    <property type="project" value="UniProtKB-KW"/>
</dbReference>
<dbReference type="FunFam" id="1.20.1070.10:FF:000140">
    <property type="entry name" value="Mas-related G-protein coupled receptor member X2"/>
    <property type="match status" value="1"/>
</dbReference>
<dbReference type="Gene3D" id="1.20.1070.10">
    <property type="entry name" value="Rhodopsin 7-helix transmembrane proteins"/>
    <property type="match status" value="1"/>
</dbReference>
<dbReference type="InterPro" id="IPR000276">
    <property type="entry name" value="GPCR_Rhodpsn"/>
</dbReference>
<dbReference type="InterPro" id="IPR017452">
    <property type="entry name" value="GPCR_Rhodpsn_7TM"/>
</dbReference>
<dbReference type="InterPro" id="IPR026234">
    <property type="entry name" value="MRGPCRFAMILY"/>
</dbReference>
<dbReference type="PANTHER" id="PTHR11334">
    <property type="entry name" value="MAS-RELATED G-PROTEIN COUPLED RECEPTOR"/>
    <property type="match status" value="1"/>
</dbReference>
<dbReference type="PANTHER" id="PTHR11334:SF8">
    <property type="entry name" value="MAS-RELATED G-PROTEIN COUPLED RECEPTOR MEMBER B8"/>
    <property type="match status" value="1"/>
</dbReference>
<dbReference type="Pfam" id="PF00001">
    <property type="entry name" value="7tm_1"/>
    <property type="match status" value="1"/>
</dbReference>
<dbReference type="PRINTS" id="PR00237">
    <property type="entry name" value="GPCRRHODOPSN"/>
</dbReference>
<dbReference type="PRINTS" id="PR02108">
    <property type="entry name" value="MRGPCRFAMILY"/>
</dbReference>
<dbReference type="SUPFAM" id="SSF81321">
    <property type="entry name" value="Family A G protein-coupled receptor-like"/>
    <property type="match status" value="1"/>
</dbReference>
<dbReference type="PROSITE" id="PS50262">
    <property type="entry name" value="G_PROTEIN_RECEP_F1_2"/>
    <property type="match status" value="1"/>
</dbReference>
<reference key="1">
    <citation type="journal article" date="2003" name="Proc. Natl. Acad. Sci. U.S.A.">
        <title>Atypical expansion in mice of the sensory neuron-specific Mrg G protein-coupled receptor family.</title>
        <authorList>
            <person name="Zylka M.J."/>
            <person name="Dong X."/>
            <person name="Southwell A.L."/>
            <person name="Anderson D.J."/>
        </authorList>
    </citation>
    <scope>NUCLEOTIDE SEQUENCE [GENOMIC DNA]</scope>
    <source>
        <strain>C57BL/6J</strain>
    </source>
</reference>
<reference key="2">
    <citation type="journal article" date="2004" name="Genome Res.">
        <title>The status, quality, and expansion of the NIH full-length cDNA project: the Mammalian Gene Collection (MGC).</title>
        <authorList>
            <consortium name="The MGC Project Team"/>
        </authorList>
    </citation>
    <scope>NUCLEOTIDE SEQUENCE [LARGE SCALE MRNA]</scope>
    <source>
        <tissue>Brain</tissue>
    </source>
</reference>
<comment type="function">
    <text evidence="1">Orphan receptor. Probably involved in the function of nociceptive neurons. May regulate nociceptor function and/or development, including the sensation or modulation of pain (By similarity).</text>
</comment>
<comment type="subcellular location">
    <subcellularLocation>
        <location evidence="5">Membrane</location>
        <topology evidence="5">Multi-pass membrane protein</topology>
    </subcellularLocation>
</comment>
<comment type="similarity">
    <text evidence="3">Belongs to the G-protein coupled receptor 1 family. Mas subfamily.</text>
</comment>
<keyword id="KW-0297">G-protein coupled receptor</keyword>
<keyword id="KW-0325">Glycoprotein</keyword>
<keyword id="KW-0472">Membrane</keyword>
<keyword id="KW-0675">Receptor</keyword>
<keyword id="KW-1185">Reference proteome</keyword>
<keyword id="KW-0807">Transducer</keyword>
<keyword id="KW-0812">Transmembrane</keyword>
<keyword id="KW-1133">Transmembrane helix</keyword>
<feature type="chain" id="PRO_0000305303" description="Mas-related G-protein coupled receptor member B8">
    <location>
        <begin position="1"/>
        <end position="330"/>
    </location>
</feature>
<feature type="topological domain" description="Extracellular" evidence="2">
    <location>
        <begin position="1"/>
        <end position="33"/>
    </location>
</feature>
<feature type="transmembrane region" description="Helical; Name=1" evidence="2">
    <location>
        <begin position="34"/>
        <end position="54"/>
    </location>
</feature>
<feature type="topological domain" description="Cytoplasmic" evidence="2">
    <location>
        <begin position="55"/>
        <end position="62"/>
    </location>
</feature>
<feature type="transmembrane region" description="Helical; Name=2" evidence="2">
    <location>
        <begin position="63"/>
        <end position="83"/>
    </location>
</feature>
<feature type="topological domain" description="Extracellular" evidence="2">
    <location>
        <begin position="84"/>
        <end position="101"/>
    </location>
</feature>
<feature type="transmembrane region" description="Helical; Name=3" evidence="2">
    <location>
        <begin position="102"/>
        <end position="122"/>
    </location>
</feature>
<feature type="topological domain" description="Cytoplasmic" evidence="2">
    <location>
        <begin position="123"/>
        <end position="146"/>
    </location>
</feature>
<feature type="transmembrane region" description="Helical; Name=4" evidence="2">
    <location>
        <begin position="147"/>
        <end position="167"/>
    </location>
</feature>
<feature type="topological domain" description="Extracellular" evidence="2">
    <location>
        <begin position="168"/>
        <end position="177"/>
    </location>
</feature>
<feature type="transmembrane region" description="Helical; Name=5" evidence="2">
    <location>
        <begin position="178"/>
        <end position="198"/>
    </location>
</feature>
<feature type="topological domain" description="Cytoplasmic" evidence="2">
    <location>
        <begin position="199"/>
        <end position="219"/>
    </location>
</feature>
<feature type="transmembrane region" description="Helical; Name=6" evidence="2">
    <location>
        <begin position="220"/>
        <end position="240"/>
    </location>
</feature>
<feature type="topological domain" description="Extracellular" evidence="2">
    <location>
        <begin position="241"/>
        <end position="260"/>
    </location>
</feature>
<feature type="transmembrane region" description="Helical; Name=7" evidence="2">
    <location>
        <begin position="261"/>
        <end position="281"/>
    </location>
</feature>
<feature type="topological domain" description="Cytoplasmic" evidence="2">
    <location>
        <begin position="282"/>
        <end position="330"/>
    </location>
</feature>
<feature type="region of interest" description="Disordered" evidence="4">
    <location>
        <begin position="302"/>
        <end position="330"/>
    </location>
</feature>
<feature type="compositionally biased region" description="Acidic residues" evidence="4">
    <location>
        <begin position="304"/>
        <end position="330"/>
    </location>
</feature>
<feature type="glycosylation site" description="N-linked (GlcNAc...) asparagine" evidence="2">
    <location>
        <position position="16"/>
    </location>
</feature>
<accession>Q7TN51</accession>
<accession>B2RR10</accession>
<gene>
    <name type="primary">Mrgprb8</name>
    <name type="synonym">Mrgb8</name>
</gene>
<evidence type="ECO:0000250" key="1"/>
<evidence type="ECO:0000255" key="2"/>
<evidence type="ECO:0000255" key="3">
    <source>
        <dbReference type="PROSITE-ProRule" id="PRU00521"/>
    </source>
</evidence>
<evidence type="ECO:0000256" key="4">
    <source>
        <dbReference type="SAM" id="MobiDB-lite"/>
    </source>
</evidence>
<evidence type="ECO:0000305" key="5"/>